<keyword id="KW-0687">Ribonucleoprotein</keyword>
<keyword id="KW-0689">Ribosomal protein</keyword>
<keyword id="KW-0694">RNA-binding</keyword>
<keyword id="KW-0699">rRNA-binding</keyword>
<accession>A1WAR2</accession>
<reference key="1">
    <citation type="submission" date="2006-12" db="EMBL/GenBank/DDBJ databases">
        <title>Complete sequence of chromosome 1 of Acidovorax sp. JS42.</title>
        <authorList>
            <person name="Copeland A."/>
            <person name="Lucas S."/>
            <person name="Lapidus A."/>
            <person name="Barry K."/>
            <person name="Detter J.C."/>
            <person name="Glavina del Rio T."/>
            <person name="Dalin E."/>
            <person name="Tice H."/>
            <person name="Pitluck S."/>
            <person name="Chertkov O."/>
            <person name="Brettin T."/>
            <person name="Bruce D."/>
            <person name="Han C."/>
            <person name="Tapia R."/>
            <person name="Gilna P."/>
            <person name="Schmutz J."/>
            <person name="Larimer F."/>
            <person name="Land M."/>
            <person name="Hauser L."/>
            <person name="Kyrpides N."/>
            <person name="Kim E."/>
            <person name="Stahl D."/>
            <person name="Richardson P."/>
        </authorList>
    </citation>
    <scope>NUCLEOTIDE SEQUENCE [LARGE SCALE GENOMIC DNA]</scope>
    <source>
        <strain>JS42</strain>
    </source>
</reference>
<sequence length="93" mass="10992">MATFKKFNKDKRPKRNTQSLLFKRKRFCRFTVAGVEEIDYKDVDTLRDFIAENGKIIPARLTGTRAIYQRQLNTAIKRARFLALLPYSDQHKI</sequence>
<feature type="chain" id="PRO_1000003435" description="Small ribosomal subunit protein bS18">
    <location>
        <begin position="1"/>
        <end position="93"/>
    </location>
</feature>
<gene>
    <name evidence="1" type="primary">rpsR</name>
    <name type="ordered locus">Ajs_3214</name>
</gene>
<dbReference type="EMBL" id="CP000539">
    <property type="protein sequence ID" value="ABM43337.1"/>
    <property type="molecule type" value="Genomic_DNA"/>
</dbReference>
<dbReference type="SMR" id="A1WAR2"/>
<dbReference type="STRING" id="232721.Ajs_3214"/>
<dbReference type="KEGG" id="ajs:Ajs_3214"/>
<dbReference type="eggNOG" id="COG0238">
    <property type="taxonomic scope" value="Bacteria"/>
</dbReference>
<dbReference type="HOGENOM" id="CLU_148710_0_3_4"/>
<dbReference type="Proteomes" id="UP000000645">
    <property type="component" value="Chromosome"/>
</dbReference>
<dbReference type="GO" id="GO:0022627">
    <property type="term" value="C:cytosolic small ribosomal subunit"/>
    <property type="evidence" value="ECO:0007669"/>
    <property type="project" value="TreeGrafter"/>
</dbReference>
<dbReference type="GO" id="GO:0070181">
    <property type="term" value="F:small ribosomal subunit rRNA binding"/>
    <property type="evidence" value="ECO:0007669"/>
    <property type="project" value="TreeGrafter"/>
</dbReference>
<dbReference type="GO" id="GO:0003735">
    <property type="term" value="F:structural constituent of ribosome"/>
    <property type="evidence" value="ECO:0007669"/>
    <property type="project" value="InterPro"/>
</dbReference>
<dbReference type="GO" id="GO:0006412">
    <property type="term" value="P:translation"/>
    <property type="evidence" value="ECO:0007669"/>
    <property type="project" value="UniProtKB-UniRule"/>
</dbReference>
<dbReference type="Gene3D" id="4.10.640.10">
    <property type="entry name" value="Ribosomal protein S18"/>
    <property type="match status" value="1"/>
</dbReference>
<dbReference type="HAMAP" id="MF_00270">
    <property type="entry name" value="Ribosomal_bS18"/>
    <property type="match status" value="1"/>
</dbReference>
<dbReference type="InterPro" id="IPR001648">
    <property type="entry name" value="Ribosomal_bS18"/>
</dbReference>
<dbReference type="InterPro" id="IPR036870">
    <property type="entry name" value="Ribosomal_bS18_sf"/>
</dbReference>
<dbReference type="NCBIfam" id="TIGR00165">
    <property type="entry name" value="S18"/>
    <property type="match status" value="1"/>
</dbReference>
<dbReference type="PANTHER" id="PTHR13479">
    <property type="entry name" value="30S RIBOSOMAL PROTEIN S18"/>
    <property type="match status" value="1"/>
</dbReference>
<dbReference type="PANTHER" id="PTHR13479:SF40">
    <property type="entry name" value="SMALL RIBOSOMAL SUBUNIT PROTEIN BS18M"/>
    <property type="match status" value="1"/>
</dbReference>
<dbReference type="Pfam" id="PF01084">
    <property type="entry name" value="Ribosomal_S18"/>
    <property type="match status" value="1"/>
</dbReference>
<dbReference type="PRINTS" id="PR00974">
    <property type="entry name" value="RIBOSOMALS18"/>
</dbReference>
<dbReference type="SUPFAM" id="SSF46911">
    <property type="entry name" value="Ribosomal protein S18"/>
    <property type="match status" value="1"/>
</dbReference>
<organism>
    <name type="scientific">Acidovorax sp. (strain JS42)</name>
    <dbReference type="NCBI Taxonomy" id="232721"/>
    <lineage>
        <taxon>Bacteria</taxon>
        <taxon>Pseudomonadati</taxon>
        <taxon>Pseudomonadota</taxon>
        <taxon>Betaproteobacteria</taxon>
        <taxon>Burkholderiales</taxon>
        <taxon>Comamonadaceae</taxon>
        <taxon>Acidovorax</taxon>
    </lineage>
</organism>
<name>RS18_ACISJ</name>
<proteinExistence type="inferred from homology"/>
<comment type="function">
    <text evidence="1">Binds as a heterodimer with protein bS6 to the central domain of the 16S rRNA, where it helps stabilize the platform of the 30S subunit.</text>
</comment>
<comment type="subunit">
    <text evidence="1">Part of the 30S ribosomal subunit. Forms a tight heterodimer with protein bS6.</text>
</comment>
<comment type="similarity">
    <text evidence="1">Belongs to the bacterial ribosomal protein bS18 family.</text>
</comment>
<protein>
    <recommendedName>
        <fullName evidence="1">Small ribosomal subunit protein bS18</fullName>
    </recommendedName>
    <alternativeName>
        <fullName evidence="2">30S ribosomal protein S18</fullName>
    </alternativeName>
</protein>
<evidence type="ECO:0000255" key="1">
    <source>
        <dbReference type="HAMAP-Rule" id="MF_00270"/>
    </source>
</evidence>
<evidence type="ECO:0000305" key="2"/>